<accession>B4E5L9</accession>
<gene>
    <name evidence="1" type="primary">nuoD</name>
    <name type="ordered locus">BceJ2315_23010</name>
    <name type="ORF">BCAL2341</name>
</gene>
<feature type="chain" id="PRO_0000371827" description="NADH-quinone oxidoreductase subunit D">
    <location>
        <begin position="1"/>
        <end position="417"/>
    </location>
</feature>
<reference key="1">
    <citation type="journal article" date="2009" name="J. Bacteriol.">
        <title>The genome of Burkholderia cenocepacia J2315, an epidemic pathogen of cystic fibrosis patients.</title>
        <authorList>
            <person name="Holden M.T."/>
            <person name="Seth-Smith H.M."/>
            <person name="Crossman L.C."/>
            <person name="Sebaihia M."/>
            <person name="Bentley S.D."/>
            <person name="Cerdeno-Tarraga A.M."/>
            <person name="Thomson N.R."/>
            <person name="Bason N."/>
            <person name="Quail M.A."/>
            <person name="Sharp S."/>
            <person name="Cherevach I."/>
            <person name="Churcher C."/>
            <person name="Goodhead I."/>
            <person name="Hauser H."/>
            <person name="Holroyd N."/>
            <person name="Mungall K."/>
            <person name="Scott P."/>
            <person name="Walker D."/>
            <person name="White B."/>
            <person name="Rose H."/>
            <person name="Iversen P."/>
            <person name="Mil-Homens D."/>
            <person name="Rocha E.P."/>
            <person name="Fialho A.M."/>
            <person name="Baldwin A."/>
            <person name="Dowson C."/>
            <person name="Barrell B.G."/>
            <person name="Govan J.R."/>
            <person name="Vandamme P."/>
            <person name="Hart C.A."/>
            <person name="Mahenthiralingam E."/>
            <person name="Parkhill J."/>
        </authorList>
    </citation>
    <scope>NUCLEOTIDE SEQUENCE [LARGE SCALE GENOMIC DNA]</scope>
    <source>
        <strain>ATCC BAA-245 / DSM 16553 / LMG 16656 / NCTC 13227 / J2315 / CF5610</strain>
    </source>
</reference>
<protein>
    <recommendedName>
        <fullName evidence="1">NADH-quinone oxidoreductase subunit D</fullName>
        <ecNumber evidence="1">7.1.1.-</ecNumber>
    </recommendedName>
    <alternativeName>
        <fullName evidence="1">NADH dehydrogenase I subunit D</fullName>
    </alternativeName>
    <alternativeName>
        <fullName evidence="1">NDH-1 subunit D</fullName>
    </alternativeName>
</protein>
<dbReference type="EC" id="7.1.1.-" evidence="1"/>
<dbReference type="EMBL" id="AM747720">
    <property type="protein sequence ID" value="CAR52642.1"/>
    <property type="molecule type" value="Genomic_DNA"/>
</dbReference>
<dbReference type="RefSeq" id="WP_006478265.1">
    <property type="nucleotide sequence ID" value="NC_011000.1"/>
</dbReference>
<dbReference type="SMR" id="B4E5L9"/>
<dbReference type="KEGG" id="bcj:BCAL2341"/>
<dbReference type="eggNOG" id="COG0649">
    <property type="taxonomic scope" value="Bacteria"/>
</dbReference>
<dbReference type="HOGENOM" id="CLU_015134_1_1_4"/>
<dbReference type="BioCyc" id="BCEN216591:G1G1V-2584-MONOMER"/>
<dbReference type="Proteomes" id="UP000001035">
    <property type="component" value="Chromosome 1"/>
</dbReference>
<dbReference type="GO" id="GO:0005886">
    <property type="term" value="C:plasma membrane"/>
    <property type="evidence" value="ECO:0007669"/>
    <property type="project" value="UniProtKB-SubCell"/>
</dbReference>
<dbReference type="GO" id="GO:0051287">
    <property type="term" value="F:NAD binding"/>
    <property type="evidence" value="ECO:0007669"/>
    <property type="project" value="InterPro"/>
</dbReference>
<dbReference type="GO" id="GO:0050136">
    <property type="term" value="F:NADH:ubiquinone reductase (non-electrogenic) activity"/>
    <property type="evidence" value="ECO:0007669"/>
    <property type="project" value="UniProtKB-UniRule"/>
</dbReference>
<dbReference type="GO" id="GO:0048038">
    <property type="term" value="F:quinone binding"/>
    <property type="evidence" value="ECO:0007669"/>
    <property type="project" value="UniProtKB-KW"/>
</dbReference>
<dbReference type="FunFam" id="1.10.645.10:FF:000005">
    <property type="entry name" value="NADH-quinone oxidoreductase subunit D"/>
    <property type="match status" value="1"/>
</dbReference>
<dbReference type="Gene3D" id="1.10.645.10">
    <property type="entry name" value="Cytochrome-c3 Hydrogenase, chain B"/>
    <property type="match status" value="1"/>
</dbReference>
<dbReference type="HAMAP" id="MF_01358">
    <property type="entry name" value="NDH1_NuoD"/>
    <property type="match status" value="1"/>
</dbReference>
<dbReference type="InterPro" id="IPR001135">
    <property type="entry name" value="NADH_Q_OxRdtase_suD"/>
</dbReference>
<dbReference type="InterPro" id="IPR014029">
    <property type="entry name" value="NADH_UbQ_OxRdtase_49kDa_CS"/>
</dbReference>
<dbReference type="InterPro" id="IPR022885">
    <property type="entry name" value="NDH1_su_D/H"/>
</dbReference>
<dbReference type="InterPro" id="IPR029014">
    <property type="entry name" value="NiFe-Hase_large"/>
</dbReference>
<dbReference type="NCBIfam" id="TIGR01962">
    <property type="entry name" value="NuoD"/>
    <property type="match status" value="1"/>
</dbReference>
<dbReference type="NCBIfam" id="NF004739">
    <property type="entry name" value="PRK06075.1"/>
    <property type="match status" value="1"/>
</dbReference>
<dbReference type="PANTHER" id="PTHR11993:SF10">
    <property type="entry name" value="NADH DEHYDROGENASE [UBIQUINONE] IRON-SULFUR PROTEIN 2, MITOCHONDRIAL"/>
    <property type="match status" value="1"/>
</dbReference>
<dbReference type="PANTHER" id="PTHR11993">
    <property type="entry name" value="NADH-UBIQUINONE OXIDOREDUCTASE 49 KDA SUBUNIT"/>
    <property type="match status" value="1"/>
</dbReference>
<dbReference type="Pfam" id="PF00346">
    <property type="entry name" value="Complex1_49kDa"/>
    <property type="match status" value="1"/>
</dbReference>
<dbReference type="SUPFAM" id="SSF56762">
    <property type="entry name" value="HydB/Nqo4-like"/>
    <property type="match status" value="1"/>
</dbReference>
<dbReference type="PROSITE" id="PS00535">
    <property type="entry name" value="COMPLEX1_49K"/>
    <property type="match status" value="1"/>
</dbReference>
<organism>
    <name type="scientific">Burkholderia cenocepacia (strain ATCC BAA-245 / DSM 16553 / LMG 16656 / NCTC 13227 / J2315 / CF5610)</name>
    <name type="common">Burkholderia cepacia (strain J2315)</name>
    <dbReference type="NCBI Taxonomy" id="216591"/>
    <lineage>
        <taxon>Bacteria</taxon>
        <taxon>Pseudomonadati</taxon>
        <taxon>Pseudomonadota</taxon>
        <taxon>Betaproteobacteria</taxon>
        <taxon>Burkholderiales</taxon>
        <taxon>Burkholderiaceae</taxon>
        <taxon>Burkholderia</taxon>
        <taxon>Burkholderia cepacia complex</taxon>
    </lineage>
</organism>
<sequence>MAEIKNYTLNFGPQHPAAHGVLRLVLELDGEVIQRADPHIGLLHRATEKLAESKTFIQSVPYMDRLDYVSMMVNEHGYVLAIEKLLGIEVPERAQYIRVLFDEITRVLNHLMWIGAHALDVGAMAVFLYAFREREDLMDVYEAVSGARMHAAYYRPGGVYRDLPDAMPQYKASKIRNEKALAKMNEARSGSVLDFIDDFFTRFPKCVDEYETLLTDNRIWKQRLVGIGVVSPERALQMGLTGPMLRGSGIAWDLRKKQPYEVYDRMDFDVPVGVNGDCYDRYLVRVEEMRQSIRIAKQCIEWLRKNPGPVMTDNHKVAPPSRVGMKTNMEDLIHHFKLFTEGFHVPEGEAYAAVEHPKGEFGIYLVSDGANKPYRLKIRAPGFAHLASLDEMARGHMIADAVTIIGTQDIVFGEIDR</sequence>
<comment type="function">
    <text evidence="1">NDH-1 shuttles electrons from NADH, via FMN and iron-sulfur (Fe-S) centers, to quinones in the respiratory chain. The immediate electron acceptor for the enzyme in this species is believed to be ubiquinone. Couples the redox reaction to proton translocation (for every two electrons transferred, four hydrogen ions are translocated across the cytoplasmic membrane), and thus conserves the redox energy in a proton gradient.</text>
</comment>
<comment type="catalytic activity">
    <reaction evidence="1">
        <text>a quinone + NADH + 5 H(+)(in) = a quinol + NAD(+) + 4 H(+)(out)</text>
        <dbReference type="Rhea" id="RHEA:57888"/>
        <dbReference type="ChEBI" id="CHEBI:15378"/>
        <dbReference type="ChEBI" id="CHEBI:24646"/>
        <dbReference type="ChEBI" id="CHEBI:57540"/>
        <dbReference type="ChEBI" id="CHEBI:57945"/>
        <dbReference type="ChEBI" id="CHEBI:132124"/>
    </reaction>
</comment>
<comment type="subunit">
    <text evidence="1">NDH-1 is composed of 14 different subunits. Subunits NuoB, C, D, E, F, and G constitute the peripheral sector of the complex.</text>
</comment>
<comment type="subcellular location">
    <subcellularLocation>
        <location evidence="1">Cell inner membrane</location>
        <topology evidence="1">Peripheral membrane protein</topology>
        <orientation evidence="1">Cytoplasmic side</orientation>
    </subcellularLocation>
</comment>
<comment type="similarity">
    <text evidence="1">Belongs to the complex I 49 kDa subunit family.</text>
</comment>
<keyword id="KW-0997">Cell inner membrane</keyword>
<keyword id="KW-1003">Cell membrane</keyword>
<keyword id="KW-0472">Membrane</keyword>
<keyword id="KW-0520">NAD</keyword>
<keyword id="KW-0874">Quinone</keyword>
<keyword id="KW-1278">Translocase</keyword>
<keyword id="KW-0813">Transport</keyword>
<keyword id="KW-0830">Ubiquinone</keyword>
<evidence type="ECO:0000255" key="1">
    <source>
        <dbReference type="HAMAP-Rule" id="MF_01358"/>
    </source>
</evidence>
<proteinExistence type="inferred from homology"/>
<name>NUOD_BURCJ</name>